<reference key="1">
    <citation type="journal article" date="2005" name="Genome Res.">
        <title>Genome sequence of Blochmannia pennsylvanicus indicates parallel evolutionary trends among bacterial mutualists of insects.</title>
        <authorList>
            <person name="Degnan P.H."/>
            <person name="Lazarus A.B."/>
            <person name="Wernegreen J.J."/>
        </authorList>
    </citation>
    <scope>NUCLEOTIDE SEQUENCE [LARGE SCALE GENOMIC DNA]</scope>
    <source>
        <strain>BPEN</strain>
    </source>
</reference>
<accession>Q493N7</accession>
<evidence type="ECO:0000255" key="1">
    <source>
        <dbReference type="HAMAP-Rule" id="MF_01380"/>
    </source>
</evidence>
<gene>
    <name evidence="1" type="primary">erpA</name>
    <name type="ordered locus">BPEN_160</name>
</gene>
<comment type="function">
    <text evidence="1">Required for insertion of 4Fe-4S clusters for at least IspG.</text>
</comment>
<comment type="cofactor">
    <cofactor evidence="1">
        <name>iron-sulfur cluster</name>
        <dbReference type="ChEBI" id="CHEBI:30408"/>
    </cofactor>
    <text evidence="1">Binds 1 iron-sulfur cluster per subunit.</text>
</comment>
<comment type="subunit">
    <text evidence="1">Homodimer.</text>
</comment>
<comment type="similarity">
    <text evidence="1">Belongs to the HesB/IscA family.</text>
</comment>
<name>ERPA_BLOPB</name>
<protein>
    <recommendedName>
        <fullName evidence="1">Iron-sulfur cluster insertion protein ErpA</fullName>
    </recommendedName>
</protein>
<organism>
    <name type="scientific">Blochmanniella pennsylvanica (strain BPEN)</name>
    <dbReference type="NCBI Taxonomy" id="291272"/>
    <lineage>
        <taxon>Bacteria</taxon>
        <taxon>Pseudomonadati</taxon>
        <taxon>Pseudomonadota</taxon>
        <taxon>Gammaproteobacteria</taxon>
        <taxon>Enterobacterales</taxon>
        <taxon>Enterobacteriaceae</taxon>
        <taxon>ant endosymbionts</taxon>
        <taxon>Candidatus Blochmanniella</taxon>
    </lineage>
</organism>
<proteinExistence type="inferred from homology"/>
<feature type="chain" id="PRO_0000311448" description="Iron-sulfur cluster insertion protein ErpA">
    <location>
        <begin position="1"/>
        <end position="117"/>
    </location>
</feature>
<feature type="binding site" evidence="1">
    <location>
        <position position="45"/>
    </location>
    <ligand>
        <name>iron-sulfur cluster</name>
        <dbReference type="ChEBI" id="CHEBI:30408"/>
    </ligand>
</feature>
<feature type="binding site" evidence="1">
    <location>
        <position position="109"/>
    </location>
    <ligand>
        <name>iron-sulfur cluster</name>
        <dbReference type="ChEBI" id="CHEBI:30408"/>
    </ligand>
</feature>
<feature type="binding site" evidence="1">
    <location>
        <position position="111"/>
    </location>
    <ligand>
        <name>iron-sulfur cluster</name>
        <dbReference type="ChEBI" id="CHEBI:30408"/>
    </ligand>
</feature>
<keyword id="KW-0408">Iron</keyword>
<keyword id="KW-0411">Iron-sulfur</keyword>
<keyword id="KW-0479">Metal-binding</keyword>
<keyword id="KW-1185">Reference proteome</keyword>
<sequence length="117" mass="13007">MNNDAKFPIQLTDFAARKVKFFTENEIINSNSHLKLRVYIIGGGCSGFQYRFILDDKISSDDCIVENNGVSLVIDPMSLQYLFGGIIDYYEGLEGSRFVVINPNAKNTCSCGSSFSV</sequence>
<dbReference type="EMBL" id="CP000016">
    <property type="protein sequence ID" value="AAZ40800.1"/>
    <property type="molecule type" value="Genomic_DNA"/>
</dbReference>
<dbReference type="RefSeq" id="WP_011282707.1">
    <property type="nucleotide sequence ID" value="NC_007292.1"/>
</dbReference>
<dbReference type="SMR" id="Q493N7"/>
<dbReference type="STRING" id="291272.BPEN_160"/>
<dbReference type="KEGG" id="bpn:BPEN_160"/>
<dbReference type="eggNOG" id="COG0316">
    <property type="taxonomic scope" value="Bacteria"/>
</dbReference>
<dbReference type="HOGENOM" id="CLU_069054_5_3_6"/>
<dbReference type="OrthoDB" id="9801228at2"/>
<dbReference type="Proteomes" id="UP000007794">
    <property type="component" value="Chromosome"/>
</dbReference>
<dbReference type="GO" id="GO:0005829">
    <property type="term" value="C:cytosol"/>
    <property type="evidence" value="ECO:0007669"/>
    <property type="project" value="TreeGrafter"/>
</dbReference>
<dbReference type="GO" id="GO:0051537">
    <property type="term" value="F:2 iron, 2 sulfur cluster binding"/>
    <property type="evidence" value="ECO:0007669"/>
    <property type="project" value="TreeGrafter"/>
</dbReference>
<dbReference type="GO" id="GO:0051539">
    <property type="term" value="F:4 iron, 4 sulfur cluster binding"/>
    <property type="evidence" value="ECO:0007669"/>
    <property type="project" value="TreeGrafter"/>
</dbReference>
<dbReference type="GO" id="GO:0005506">
    <property type="term" value="F:iron ion binding"/>
    <property type="evidence" value="ECO:0007669"/>
    <property type="project" value="UniProtKB-UniRule"/>
</dbReference>
<dbReference type="GO" id="GO:0016226">
    <property type="term" value="P:iron-sulfur cluster assembly"/>
    <property type="evidence" value="ECO:0007669"/>
    <property type="project" value="UniProtKB-UniRule"/>
</dbReference>
<dbReference type="FunFam" id="2.60.300.12:FF:000002">
    <property type="entry name" value="Iron-sulfur cluster insertion protein ErpA"/>
    <property type="match status" value="1"/>
</dbReference>
<dbReference type="Gene3D" id="2.60.300.12">
    <property type="entry name" value="HesB-like domain"/>
    <property type="match status" value="1"/>
</dbReference>
<dbReference type="HAMAP" id="MF_01380">
    <property type="entry name" value="Fe_S_insert_ErpA"/>
    <property type="match status" value="1"/>
</dbReference>
<dbReference type="InterPro" id="IPR000361">
    <property type="entry name" value="FeS_biogenesis"/>
</dbReference>
<dbReference type="InterPro" id="IPR016092">
    <property type="entry name" value="FeS_cluster_insertion"/>
</dbReference>
<dbReference type="InterPro" id="IPR017870">
    <property type="entry name" value="FeS_cluster_insertion_CS"/>
</dbReference>
<dbReference type="InterPro" id="IPR023063">
    <property type="entry name" value="FeS_cluster_insertion_RrpA"/>
</dbReference>
<dbReference type="InterPro" id="IPR035903">
    <property type="entry name" value="HesB-like_dom_sf"/>
</dbReference>
<dbReference type="NCBIfam" id="TIGR00049">
    <property type="entry name" value="iron-sulfur cluster assembly accessory protein"/>
    <property type="match status" value="1"/>
</dbReference>
<dbReference type="NCBIfam" id="NF010147">
    <property type="entry name" value="PRK13623.1"/>
    <property type="match status" value="1"/>
</dbReference>
<dbReference type="PANTHER" id="PTHR43011">
    <property type="entry name" value="IRON-SULFUR CLUSTER ASSEMBLY 2 HOMOLOG, MITOCHONDRIAL"/>
    <property type="match status" value="1"/>
</dbReference>
<dbReference type="PANTHER" id="PTHR43011:SF1">
    <property type="entry name" value="IRON-SULFUR CLUSTER ASSEMBLY 2 HOMOLOG, MITOCHONDRIAL"/>
    <property type="match status" value="1"/>
</dbReference>
<dbReference type="Pfam" id="PF01521">
    <property type="entry name" value="Fe-S_biosyn"/>
    <property type="match status" value="1"/>
</dbReference>
<dbReference type="SUPFAM" id="SSF89360">
    <property type="entry name" value="HesB-like domain"/>
    <property type="match status" value="1"/>
</dbReference>
<dbReference type="PROSITE" id="PS01152">
    <property type="entry name" value="HESB"/>
    <property type="match status" value="1"/>
</dbReference>